<organism>
    <name type="scientific">Levilactobacillus brevis (strain ATCC 367 / BCRC 12310 / CIP 105137 / JCM 1170 / LMG 11437 / NCIMB 947 / NCTC 947)</name>
    <name type="common">Lactobacillus brevis</name>
    <dbReference type="NCBI Taxonomy" id="387344"/>
    <lineage>
        <taxon>Bacteria</taxon>
        <taxon>Bacillati</taxon>
        <taxon>Bacillota</taxon>
        <taxon>Bacilli</taxon>
        <taxon>Lactobacillales</taxon>
        <taxon>Lactobacillaceae</taxon>
        <taxon>Levilactobacillus</taxon>
    </lineage>
</organism>
<proteinExistence type="evidence at protein level"/>
<gene>
    <name evidence="1" type="primary">ecfA1</name>
    <name type="synonym">cbiO1</name>
    <name type="ordered locus">LVIS_1662</name>
</gene>
<accession>Q03PY5</accession>
<name>ECFA1_LEVBA</name>
<keyword id="KW-0002">3D-structure</keyword>
<keyword id="KW-0067">ATP-binding</keyword>
<keyword id="KW-1003">Cell membrane</keyword>
<keyword id="KW-0472">Membrane</keyword>
<keyword id="KW-0547">Nucleotide-binding</keyword>
<keyword id="KW-1185">Reference proteome</keyword>
<keyword id="KW-1278">Translocase</keyword>
<keyword id="KW-0813">Transport</keyword>
<reference key="1">
    <citation type="journal article" date="2006" name="Proc. Natl. Acad. Sci. U.S.A.">
        <title>Comparative genomics of the lactic acid bacteria.</title>
        <authorList>
            <person name="Makarova K.S."/>
            <person name="Slesarev A."/>
            <person name="Wolf Y.I."/>
            <person name="Sorokin A."/>
            <person name="Mirkin B."/>
            <person name="Koonin E.V."/>
            <person name="Pavlov A."/>
            <person name="Pavlova N."/>
            <person name="Karamychev V."/>
            <person name="Polouchine N."/>
            <person name="Shakhova V."/>
            <person name="Grigoriev I."/>
            <person name="Lou Y."/>
            <person name="Rohksar D."/>
            <person name="Lucas S."/>
            <person name="Huang K."/>
            <person name="Goodstein D.M."/>
            <person name="Hawkins T."/>
            <person name="Plengvidhya V."/>
            <person name="Welker D."/>
            <person name="Hughes J."/>
            <person name="Goh Y."/>
            <person name="Benson A."/>
            <person name="Baldwin K."/>
            <person name="Lee J.-H."/>
            <person name="Diaz-Muniz I."/>
            <person name="Dosti B."/>
            <person name="Smeianov V."/>
            <person name="Wechter W."/>
            <person name="Barabote R."/>
            <person name="Lorca G."/>
            <person name="Altermann E."/>
            <person name="Barrangou R."/>
            <person name="Ganesan B."/>
            <person name="Xie Y."/>
            <person name="Rawsthorne H."/>
            <person name="Tamir D."/>
            <person name="Parker C."/>
            <person name="Breidt F."/>
            <person name="Broadbent J.R."/>
            <person name="Hutkins R."/>
            <person name="O'Sullivan D."/>
            <person name="Steele J."/>
            <person name="Unlu G."/>
            <person name="Saier M.H. Jr."/>
            <person name="Klaenhammer T."/>
            <person name="Richardson P."/>
            <person name="Kozyavkin S."/>
            <person name="Weimer B.C."/>
            <person name="Mills D.A."/>
        </authorList>
    </citation>
    <scope>NUCLEOTIDE SEQUENCE [LARGE SCALE GENOMIC DNA]</scope>
    <source>
        <strain>ATCC 367 / BCRC 12310 / CIP 105137 / JCM 1170 / LMG 11437 / NCIMB 947 / NCTC 947</strain>
    </source>
</reference>
<protein>
    <recommendedName>
        <fullName evidence="1">Energy-coupling factor transporter ATP-binding protein EcfA1</fullName>
        <shortName evidence="1">ECF transporter A component EcfA1</shortName>
        <ecNumber evidence="1">7.-.-.-</ecNumber>
    </recommendedName>
</protein>
<feature type="chain" id="PRO_0000287944" description="Energy-coupling factor transporter ATP-binding protein EcfA1">
    <location>
        <begin position="1"/>
        <end position="279"/>
    </location>
</feature>
<feature type="domain" description="ABC transporter" evidence="1">
    <location>
        <begin position="6"/>
        <end position="240"/>
    </location>
</feature>
<feature type="binding site" evidence="1">
    <location>
        <begin position="40"/>
        <end position="47"/>
    </location>
    <ligand>
        <name>ATP</name>
        <dbReference type="ChEBI" id="CHEBI:30616"/>
    </ligand>
</feature>
<feature type="strand" evidence="2">
    <location>
        <begin position="4"/>
        <end position="11"/>
    </location>
</feature>
<feature type="strand" evidence="2">
    <location>
        <begin position="14"/>
        <end position="17"/>
    </location>
</feature>
<feature type="turn" evidence="3">
    <location>
        <begin position="18"/>
        <end position="21"/>
    </location>
</feature>
<feature type="strand" evidence="2">
    <location>
        <begin position="23"/>
        <end position="30"/>
    </location>
</feature>
<feature type="strand" evidence="2">
    <location>
        <begin position="35"/>
        <end position="40"/>
    </location>
</feature>
<feature type="strand" evidence="3">
    <location>
        <begin position="42"/>
        <end position="44"/>
    </location>
</feature>
<feature type="helix" evidence="2">
    <location>
        <begin position="46"/>
        <end position="52"/>
    </location>
</feature>
<feature type="strand" evidence="2">
    <location>
        <begin position="54"/>
        <end position="57"/>
    </location>
</feature>
<feature type="strand" evidence="2">
    <location>
        <begin position="60"/>
        <end position="66"/>
    </location>
</feature>
<feature type="strand" evidence="2">
    <location>
        <begin position="73"/>
        <end position="75"/>
    </location>
</feature>
<feature type="helix" evidence="2">
    <location>
        <begin position="76"/>
        <end position="80"/>
    </location>
</feature>
<feature type="strand" evidence="2">
    <location>
        <begin position="83"/>
        <end position="86"/>
    </location>
</feature>
<feature type="strand" evidence="3">
    <location>
        <begin position="90"/>
        <end position="93"/>
    </location>
</feature>
<feature type="strand" evidence="3">
    <location>
        <begin position="96"/>
        <end position="98"/>
    </location>
</feature>
<feature type="helix" evidence="2">
    <location>
        <begin position="99"/>
        <end position="109"/>
    </location>
</feature>
<feature type="helix" evidence="2">
    <location>
        <begin position="114"/>
        <end position="116"/>
    </location>
</feature>
<feature type="helix" evidence="2">
    <location>
        <begin position="117"/>
        <end position="125"/>
    </location>
</feature>
<feature type="turn" evidence="2">
    <location>
        <begin position="126"/>
        <end position="129"/>
    </location>
</feature>
<feature type="helix" evidence="2">
    <location>
        <begin position="131"/>
        <end position="133"/>
    </location>
</feature>
<feature type="helix" evidence="2">
    <location>
        <begin position="138"/>
        <end position="140"/>
    </location>
</feature>
<feature type="helix" evidence="2">
    <location>
        <begin position="144"/>
        <end position="157"/>
    </location>
</feature>
<feature type="strand" evidence="2">
    <location>
        <begin position="160"/>
        <end position="166"/>
    </location>
</feature>
<feature type="helix" evidence="2">
    <location>
        <begin position="168"/>
        <end position="170"/>
    </location>
</feature>
<feature type="helix" evidence="2">
    <location>
        <begin position="173"/>
        <end position="190"/>
    </location>
</feature>
<feature type="strand" evidence="2">
    <location>
        <begin position="193"/>
        <end position="198"/>
    </location>
</feature>
<feature type="helix" evidence="2">
    <location>
        <begin position="201"/>
        <end position="205"/>
    </location>
</feature>
<feature type="strand" evidence="2">
    <location>
        <begin position="208"/>
        <end position="214"/>
    </location>
</feature>
<feature type="strand" evidence="2">
    <location>
        <begin position="217"/>
        <end position="222"/>
    </location>
</feature>
<feature type="helix" evidence="2">
    <location>
        <begin position="224"/>
        <end position="227"/>
    </location>
</feature>
<feature type="helix" evidence="3">
    <location>
        <begin position="228"/>
        <end position="232"/>
    </location>
</feature>
<feature type="helix" evidence="2">
    <location>
        <begin position="234"/>
        <end position="237"/>
    </location>
</feature>
<feature type="helix" evidence="2">
    <location>
        <begin position="243"/>
        <end position="253"/>
    </location>
</feature>
<feature type="helix" evidence="2">
    <location>
        <begin position="265"/>
        <end position="276"/>
    </location>
</feature>
<evidence type="ECO:0000255" key="1">
    <source>
        <dbReference type="HAMAP-Rule" id="MF_01710"/>
    </source>
</evidence>
<evidence type="ECO:0007829" key="2">
    <source>
        <dbReference type="PDB" id="4HUQ"/>
    </source>
</evidence>
<evidence type="ECO:0007829" key="3">
    <source>
        <dbReference type="PDB" id="4RFS"/>
    </source>
</evidence>
<dbReference type="EC" id="7.-.-.-" evidence="1"/>
<dbReference type="EMBL" id="CP000416">
    <property type="protein sequence ID" value="ABJ64737.1"/>
    <property type="molecule type" value="Genomic_DNA"/>
</dbReference>
<dbReference type="RefSeq" id="WP_011668471.1">
    <property type="nucleotide sequence ID" value="NC_008497.1"/>
</dbReference>
<dbReference type="PDB" id="4HUQ">
    <property type="method" value="X-ray"/>
    <property type="resolution" value="3.00 A"/>
    <property type="chains" value="B=1-279"/>
</dbReference>
<dbReference type="PDB" id="4HZU">
    <property type="method" value="X-ray"/>
    <property type="resolution" value="3.53 A"/>
    <property type="chains" value="A=1-279"/>
</dbReference>
<dbReference type="PDB" id="4RFS">
    <property type="method" value="X-ray"/>
    <property type="resolution" value="3.23 A"/>
    <property type="chains" value="B=1-279"/>
</dbReference>
<dbReference type="PDBsum" id="4HUQ"/>
<dbReference type="PDBsum" id="4HZU"/>
<dbReference type="PDBsum" id="4RFS"/>
<dbReference type="SMR" id="Q03PY5"/>
<dbReference type="DIP" id="DIP-60219N"/>
<dbReference type="IntAct" id="Q03PY5">
    <property type="interactions" value="4"/>
</dbReference>
<dbReference type="STRING" id="387344.LVIS_1662"/>
<dbReference type="TCDB" id="3.A.1.26.9">
    <property type="family name" value="the atp-binding cassette (abc) superfamily"/>
</dbReference>
<dbReference type="TCDB" id="3.A.1.28.2">
    <property type="family name" value="the atp-binding cassette (abc) superfamily"/>
</dbReference>
<dbReference type="KEGG" id="lbr:LVIS_1662"/>
<dbReference type="eggNOG" id="COG1122">
    <property type="taxonomic scope" value="Bacteria"/>
</dbReference>
<dbReference type="HOGENOM" id="CLU_000604_1_22_9"/>
<dbReference type="EvolutionaryTrace" id="Q03PY5"/>
<dbReference type="Proteomes" id="UP000001652">
    <property type="component" value="Chromosome"/>
</dbReference>
<dbReference type="GO" id="GO:0043190">
    <property type="term" value="C:ATP-binding cassette (ABC) transporter complex"/>
    <property type="evidence" value="ECO:0007669"/>
    <property type="project" value="TreeGrafter"/>
</dbReference>
<dbReference type="GO" id="GO:0005524">
    <property type="term" value="F:ATP binding"/>
    <property type="evidence" value="ECO:0007669"/>
    <property type="project" value="UniProtKB-KW"/>
</dbReference>
<dbReference type="GO" id="GO:0016887">
    <property type="term" value="F:ATP hydrolysis activity"/>
    <property type="evidence" value="ECO:0007669"/>
    <property type="project" value="InterPro"/>
</dbReference>
<dbReference type="GO" id="GO:0042626">
    <property type="term" value="F:ATPase-coupled transmembrane transporter activity"/>
    <property type="evidence" value="ECO:0007669"/>
    <property type="project" value="TreeGrafter"/>
</dbReference>
<dbReference type="CDD" id="cd03225">
    <property type="entry name" value="ABC_cobalt_CbiO_domain1"/>
    <property type="match status" value="1"/>
</dbReference>
<dbReference type="FunFam" id="3.40.50.300:FF:000224">
    <property type="entry name" value="Energy-coupling factor transporter ATP-binding protein EcfA"/>
    <property type="match status" value="1"/>
</dbReference>
<dbReference type="Gene3D" id="3.40.50.300">
    <property type="entry name" value="P-loop containing nucleotide triphosphate hydrolases"/>
    <property type="match status" value="1"/>
</dbReference>
<dbReference type="InterPro" id="IPR003593">
    <property type="entry name" value="AAA+_ATPase"/>
</dbReference>
<dbReference type="InterPro" id="IPR003439">
    <property type="entry name" value="ABC_transporter-like_ATP-bd"/>
</dbReference>
<dbReference type="InterPro" id="IPR017871">
    <property type="entry name" value="ABC_transporter-like_CS"/>
</dbReference>
<dbReference type="InterPro" id="IPR015856">
    <property type="entry name" value="ABC_transpr_CbiO/EcfA_su"/>
</dbReference>
<dbReference type="InterPro" id="IPR050095">
    <property type="entry name" value="ECF_ABC_transporter_ATP-bd"/>
</dbReference>
<dbReference type="InterPro" id="IPR030947">
    <property type="entry name" value="EcfA_1"/>
</dbReference>
<dbReference type="InterPro" id="IPR027417">
    <property type="entry name" value="P-loop_NTPase"/>
</dbReference>
<dbReference type="NCBIfam" id="TIGR04520">
    <property type="entry name" value="ECF_ATPase_1"/>
    <property type="match status" value="1"/>
</dbReference>
<dbReference type="NCBIfam" id="NF010156">
    <property type="entry name" value="PRK13635.1"/>
    <property type="match status" value="1"/>
</dbReference>
<dbReference type="NCBIfam" id="NF010167">
    <property type="entry name" value="PRK13648.1"/>
    <property type="match status" value="1"/>
</dbReference>
<dbReference type="PANTHER" id="PTHR43553:SF24">
    <property type="entry name" value="ENERGY-COUPLING FACTOR TRANSPORTER ATP-BINDING PROTEIN ECFA1"/>
    <property type="match status" value="1"/>
</dbReference>
<dbReference type="PANTHER" id="PTHR43553">
    <property type="entry name" value="HEAVY METAL TRANSPORTER"/>
    <property type="match status" value="1"/>
</dbReference>
<dbReference type="Pfam" id="PF00005">
    <property type="entry name" value="ABC_tran"/>
    <property type="match status" value="1"/>
</dbReference>
<dbReference type="SMART" id="SM00382">
    <property type="entry name" value="AAA"/>
    <property type="match status" value="1"/>
</dbReference>
<dbReference type="SUPFAM" id="SSF52540">
    <property type="entry name" value="P-loop containing nucleoside triphosphate hydrolases"/>
    <property type="match status" value="1"/>
</dbReference>
<dbReference type="PROSITE" id="PS00211">
    <property type="entry name" value="ABC_TRANSPORTER_1"/>
    <property type="match status" value="1"/>
</dbReference>
<dbReference type="PROSITE" id="PS50893">
    <property type="entry name" value="ABC_TRANSPORTER_2"/>
    <property type="match status" value="1"/>
</dbReference>
<dbReference type="PROSITE" id="PS51246">
    <property type="entry name" value="CBIO"/>
    <property type="match status" value="1"/>
</dbReference>
<comment type="function">
    <text evidence="1">ATP-binding (A) component of a common energy-coupling factor (ECF) ABC-transporter complex. Unlike classic ABC transporters this ECF transporter provides the energy necessary to transport a number of different substrates.</text>
</comment>
<comment type="subunit">
    <text evidence="1">Forms a stable energy-coupling factor (ECF) transporter complex composed of 2 membrane-embedded substrate-binding proteins (S component), 2 ATP-binding proteins (A component) and 2 transmembrane proteins (T component).</text>
</comment>
<comment type="subcellular location">
    <subcellularLocation>
        <location evidence="1">Cell membrane</location>
        <topology evidence="1">Peripheral membrane protein</topology>
    </subcellularLocation>
</comment>
<comment type="similarity">
    <text evidence="1">Belongs to the ABC transporter superfamily. Energy-coupling factor EcfA family.</text>
</comment>
<sequence>MTENIISVDHLTYQYDENQAPALTDVSFTVHAGEWLAIVGHNGSGKSTLAKSLDGLLPFTQGSVTVGGITLTPETVWQVREQIGMIFQNPDNQFVGATVEDDVAFGLENRQISRDEMVPRVQAALAQVGMTSFAQREPSSLSGGQKQRVALAGIVAIAPKILILDEATSMLDPQGRIEMLAIVRQLRQQQNLTVISITHDIDEAASADRVLVIDDGRLVDEAVPSQIFERGTQLVEMGLDLPFTEKLKAALRQRGITPPTTYQTAAEMEEWLWQSLSNT</sequence>